<reference key="1">
    <citation type="journal article" date="2007" name="ISME J.">
        <title>Population level functional diversity in a microbial community revealed by comparative genomic and metagenomic analyses.</title>
        <authorList>
            <person name="Bhaya D."/>
            <person name="Grossman A.R."/>
            <person name="Steunou A.-S."/>
            <person name="Khuri N."/>
            <person name="Cohan F.M."/>
            <person name="Hamamura N."/>
            <person name="Melendrez M.C."/>
            <person name="Bateson M.M."/>
            <person name="Ward D.M."/>
            <person name="Heidelberg J.F."/>
        </authorList>
    </citation>
    <scope>NUCLEOTIDE SEQUENCE [LARGE SCALE GENOMIC DNA]</scope>
    <source>
        <strain>JA-2-3B'a(2-13)</strain>
    </source>
</reference>
<organism>
    <name type="scientific">Synechococcus sp. (strain JA-2-3B'a(2-13))</name>
    <name type="common">Cyanobacteria bacterium Yellowstone B-Prime</name>
    <dbReference type="NCBI Taxonomy" id="321332"/>
    <lineage>
        <taxon>Bacteria</taxon>
        <taxon>Bacillati</taxon>
        <taxon>Cyanobacteriota</taxon>
        <taxon>Cyanophyceae</taxon>
        <taxon>Synechococcales</taxon>
        <taxon>Synechococcaceae</taxon>
        <taxon>Synechococcus</taxon>
    </lineage>
</organism>
<evidence type="ECO:0000255" key="1">
    <source>
        <dbReference type="HAMAP-Rule" id="MF_01642"/>
    </source>
</evidence>
<sequence length="416" mass="45787">MARINDHFLKLKTGYLFPEIARRVQAFATAHPEAQIIKMGIGDVTEPLPEACRTAMIRAVEEMGERATFRGYGPEQGYEWLRQAIARHDFQARNCDIDASEIFVSDGSKCDCGNILDILGHDNTIAITDPVYPVYVDTNVMAGHTGPANERGEYEGLVYLPITAENHFTASLPSQKVDVIYLCFPNNPTGAVATREHLQNWVDYARAHGSLILFDAAYEAYITEPGIPHSIYEIPGARECAIEFRSFSKTAGFTGTRCAFTVVPKSLRGQAADGSWVDLWSLWYRRQSTKFNGVSYIVQRGAEAVYSEAGQAQVQGLVQFYLENARIIRQQLAEVGIQVYGGVNAPYVWVKTPDGLSSWEFFDKLLHTCHVVGTPGSGFGSAGEGYLRLSAFNSRANVEEAMRRIGSVFAGAGAVG</sequence>
<gene>
    <name evidence="1" type="primary">dapL</name>
    <name type="synonym">aspB</name>
    <name type="ordered locus">CYB_1421</name>
</gene>
<comment type="function">
    <text evidence="1">Involved in the synthesis of meso-diaminopimelate (m-DAP or DL-DAP), required for both lysine and peptidoglycan biosynthesis. Catalyzes the direct conversion of tetrahydrodipicolinate to LL-diaminopimelate.</text>
</comment>
<comment type="catalytic activity">
    <reaction evidence="1">
        <text>(2S,6S)-2,6-diaminopimelate + 2-oxoglutarate = (S)-2,3,4,5-tetrahydrodipicolinate + L-glutamate + H2O + H(+)</text>
        <dbReference type="Rhea" id="RHEA:23988"/>
        <dbReference type="ChEBI" id="CHEBI:15377"/>
        <dbReference type="ChEBI" id="CHEBI:15378"/>
        <dbReference type="ChEBI" id="CHEBI:16810"/>
        <dbReference type="ChEBI" id="CHEBI:16845"/>
        <dbReference type="ChEBI" id="CHEBI:29985"/>
        <dbReference type="ChEBI" id="CHEBI:57609"/>
        <dbReference type="EC" id="2.6.1.83"/>
    </reaction>
</comment>
<comment type="cofactor">
    <cofactor evidence="1">
        <name>pyridoxal 5'-phosphate</name>
        <dbReference type="ChEBI" id="CHEBI:597326"/>
    </cofactor>
</comment>
<comment type="pathway">
    <text evidence="1">Amino-acid biosynthesis; L-lysine biosynthesis via DAP pathway; LL-2,6-diaminopimelate from (S)-tetrahydrodipicolinate (aminotransferase route): step 1/1.</text>
</comment>
<comment type="subunit">
    <text evidence="1">Homodimer.</text>
</comment>
<comment type="similarity">
    <text evidence="1">Belongs to the class-I pyridoxal-phosphate-dependent aminotransferase family. LL-diaminopimelate aminotransferase subfamily.</text>
</comment>
<dbReference type="EC" id="2.6.1.83" evidence="1"/>
<dbReference type="EMBL" id="CP000240">
    <property type="protein sequence ID" value="ABD02388.1"/>
    <property type="molecule type" value="Genomic_DNA"/>
</dbReference>
<dbReference type="RefSeq" id="WP_011433036.1">
    <property type="nucleotide sequence ID" value="NC_007776.1"/>
</dbReference>
<dbReference type="SMR" id="Q2JLL9"/>
<dbReference type="STRING" id="321332.CYB_1421"/>
<dbReference type="KEGG" id="cyb:CYB_1421"/>
<dbReference type="eggNOG" id="COG0436">
    <property type="taxonomic scope" value="Bacteria"/>
</dbReference>
<dbReference type="HOGENOM" id="CLU_051433_0_0_3"/>
<dbReference type="OrthoDB" id="9802328at2"/>
<dbReference type="UniPathway" id="UPA00034">
    <property type="reaction ID" value="UER00466"/>
</dbReference>
<dbReference type="Proteomes" id="UP000001938">
    <property type="component" value="Chromosome"/>
</dbReference>
<dbReference type="GO" id="GO:0010285">
    <property type="term" value="F:L,L-diaminopimelate aminotransferase activity"/>
    <property type="evidence" value="ECO:0007669"/>
    <property type="project" value="UniProtKB-UniRule"/>
</dbReference>
<dbReference type="GO" id="GO:0030170">
    <property type="term" value="F:pyridoxal phosphate binding"/>
    <property type="evidence" value="ECO:0007669"/>
    <property type="project" value="UniProtKB-UniRule"/>
</dbReference>
<dbReference type="GO" id="GO:0033362">
    <property type="term" value="P:lysine biosynthetic process via diaminopimelate, diaminopimelate-aminotransferase pathway"/>
    <property type="evidence" value="ECO:0007669"/>
    <property type="project" value="UniProtKB-UniRule"/>
</dbReference>
<dbReference type="CDD" id="cd00609">
    <property type="entry name" value="AAT_like"/>
    <property type="match status" value="1"/>
</dbReference>
<dbReference type="FunFam" id="3.40.640.10:FF:000099">
    <property type="entry name" value="LL-diaminopimelate aminotransferase, chloroplastic"/>
    <property type="match status" value="1"/>
</dbReference>
<dbReference type="Gene3D" id="3.90.1150.10">
    <property type="entry name" value="Aspartate Aminotransferase, domain 1"/>
    <property type="match status" value="1"/>
</dbReference>
<dbReference type="Gene3D" id="3.40.640.10">
    <property type="entry name" value="Type I PLP-dependent aspartate aminotransferase-like (Major domain)"/>
    <property type="match status" value="1"/>
</dbReference>
<dbReference type="HAMAP" id="MF_01642">
    <property type="entry name" value="DapL_aminotrans_1"/>
    <property type="match status" value="1"/>
</dbReference>
<dbReference type="InterPro" id="IPR004839">
    <property type="entry name" value="Aminotransferase_I/II_large"/>
</dbReference>
<dbReference type="InterPro" id="IPR019942">
    <property type="entry name" value="DapL/ALD1"/>
</dbReference>
<dbReference type="InterPro" id="IPR015424">
    <property type="entry name" value="PyrdxlP-dep_Trfase"/>
</dbReference>
<dbReference type="InterPro" id="IPR015421">
    <property type="entry name" value="PyrdxlP-dep_Trfase_major"/>
</dbReference>
<dbReference type="InterPro" id="IPR015422">
    <property type="entry name" value="PyrdxlP-dep_Trfase_small"/>
</dbReference>
<dbReference type="NCBIfam" id="TIGR03542">
    <property type="entry name" value="DAPAT_plant"/>
    <property type="match status" value="1"/>
</dbReference>
<dbReference type="PANTHER" id="PTHR43144">
    <property type="entry name" value="AMINOTRANSFERASE"/>
    <property type="match status" value="1"/>
</dbReference>
<dbReference type="Pfam" id="PF00155">
    <property type="entry name" value="Aminotran_1_2"/>
    <property type="match status" value="1"/>
</dbReference>
<dbReference type="SUPFAM" id="SSF53383">
    <property type="entry name" value="PLP-dependent transferases"/>
    <property type="match status" value="1"/>
</dbReference>
<keyword id="KW-0032">Aminotransferase</keyword>
<keyword id="KW-0663">Pyridoxal phosphate</keyword>
<keyword id="KW-1185">Reference proteome</keyword>
<keyword id="KW-0808">Transferase</keyword>
<proteinExistence type="inferred from homology"/>
<feature type="chain" id="PRO_0000312548" description="LL-diaminopimelate aminotransferase">
    <location>
        <begin position="1"/>
        <end position="416"/>
    </location>
</feature>
<feature type="binding site" evidence="1">
    <location>
        <position position="15"/>
    </location>
    <ligand>
        <name>substrate</name>
    </ligand>
</feature>
<feature type="binding site" evidence="1">
    <location>
        <position position="42"/>
    </location>
    <ligand>
        <name>substrate</name>
    </ligand>
</feature>
<feature type="binding site" evidence="1">
    <location>
        <position position="72"/>
    </location>
    <ligand>
        <name>pyridoxal 5'-phosphate</name>
        <dbReference type="ChEBI" id="CHEBI:597326"/>
    </ligand>
</feature>
<feature type="binding site" evidence="1">
    <location>
        <begin position="108"/>
        <end position="109"/>
    </location>
    <ligand>
        <name>pyridoxal 5'-phosphate</name>
        <dbReference type="ChEBI" id="CHEBI:597326"/>
    </ligand>
</feature>
<feature type="binding site" evidence="1">
    <location>
        <position position="109"/>
    </location>
    <ligand>
        <name>substrate</name>
    </ligand>
</feature>
<feature type="binding site" evidence="1">
    <location>
        <position position="132"/>
    </location>
    <ligand>
        <name>pyridoxal 5'-phosphate</name>
        <dbReference type="ChEBI" id="CHEBI:597326"/>
    </ligand>
</feature>
<feature type="binding site" evidence="1">
    <location>
        <position position="132"/>
    </location>
    <ligand>
        <name>substrate</name>
    </ligand>
</feature>
<feature type="binding site" evidence="1">
    <location>
        <position position="187"/>
    </location>
    <ligand>
        <name>pyridoxal 5'-phosphate</name>
        <dbReference type="ChEBI" id="CHEBI:597326"/>
    </ligand>
</feature>
<feature type="binding site" evidence="1">
    <location>
        <position position="187"/>
    </location>
    <ligand>
        <name>substrate</name>
    </ligand>
</feature>
<feature type="binding site" evidence="1">
    <location>
        <position position="218"/>
    </location>
    <ligand>
        <name>pyridoxal 5'-phosphate</name>
        <dbReference type="ChEBI" id="CHEBI:597326"/>
    </ligand>
</feature>
<feature type="binding site" evidence="1">
    <location>
        <begin position="246"/>
        <end position="248"/>
    </location>
    <ligand>
        <name>pyridoxal 5'-phosphate</name>
        <dbReference type="ChEBI" id="CHEBI:597326"/>
    </ligand>
</feature>
<feature type="binding site" evidence="1">
    <location>
        <position position="257"/>
    </location>
    <ligand>
        <name>pyridoxal 5'-phosphate</name>
        <dbReference type="ChEBI" id="CHEBI:597326"/>
    </ligand>
</feature>
<feature type="binding site" evidence="1">
    <location>
        <position position="292"/>
    </location>
    <ligand>
        <name>pyridoxal 5'-phosphate</name>
        <dbReference type="ChEBI" id="CHEBI:597326"/>
    </ligand>
</feature>
<feature type="binding site" evidence="1">
    <location>
        <position position="292"/>
    </location>
    <ligand>
        <name>substrate</name>
    </ligand>
</feature>
<feature type="binding site" evidence="1">
    <location>
        <position position="388"/>
    </location>
    <ligand>
        <name>substrate</name>
    </ligand>
</feature>
<feature type="modified residue" description="N6-(pyridoxal phosphate)lysine" evidence="1">
    <location>
        <position position="249"/>
    </location>
</feature>
<protein>
    <recommendedName>
        <fullName evidence="1">LL-diaminopimelate aminotransferase</fullName>
        <shortName evidence="1">DAP-AT</shortName>
        <shortName evidence="1">DAP-aminotransferase</shortName>
        <shortName evidence="1">LL-DAP-aminotransferase</shortName>
        <ecNumber evidence="1">2.6.1.83</ecNumber>
    </recommendedName>
</protein>
<accession>Q2JLL9</accession>
<name>DAPAT_SYNJB</name>